<evidence type="ECO:0000250" key="1">
    <source>
        <dbReference type="UniProtKB" id="P56785"/>
    </source>
</evidence>
<evidence type="ECO:0000255" key="2"/>
<evidence type="ECO:0000305" key="3"/>
<proteinExistence type="inferred from homology"/>
<geneLocation type="chloroplast"/>
<reference key="1">
    <citation type="journal article" date="2005" name="BMC Biol.">
        <title>The complete chloroplast DNA sequences of the charophycean green algae Staurastrum and Zygnema reveal that the chloroplast genome underwent extensive changes during the evolution of the Zygnematales.</title>
        <authorList>
            <person name="Turmel M."/>
            <person name="Otis C."/>
            <person name="Lemieux C."/>
        </authorList>
    </citation>
    <scope>NUCLEOTIDE SEQUENCE [LARGE SCALE GENOMIC DNA]</scope>
</reference>
<protein>
    <recommendedName>
        <fullName evidence="1">Protein TIC 214</fullName>
    </recommendedName>
    <alternativeName>
        <fullName evidence="1">Translocon at the inner envelope membrane of chloroplasts 214</fullName>
        <shortName evidence="1">AtTIC214</shortName>
    </alternativeName>
</protein>
<sequence>MNTIYLVPFFLGTFSGFLATLPIGPAKILAVRKFLLISKGNENEVYNLKSSNTILLASLCGLIFAQFLFVLALQFPFLYSLWVKPHFFSFFFVLVLFIYLYQIKNIQFDISNNQFLLKSESNFSYQQAAFLETLLLQLLNPVVLPNPVFCRLTNVFLFRYSTISTFFAGNFLGLLSGYGIFFLSTLFLLKRLEEDAPTIYRLVKIKIHQFFGIILVIFSFLCLSRTPLPAIKPFKLKEISTTFSSTKVWYENIWPDSFFGYDRWKRPLRLISVDEKKSQPNNELKPFNKMFFSQFFFEGGIQDGNYRLVHNFPQSLSLISQNINSILNNKLNNSQIESIEKNKNFIDEWIQEKKNRQNQISQNINTKIKHIEKGSYLEELVEKKFSSFDNNKNKISKQMDPRLNADIRGKKFFFKNKSFLFLTKEFFSKKDSLFAVEKKNLIDTYTKNKFKLFLTENSQNLSSLETRTEKIPFITWKPIIQSFYDKNQNLKETSLDQNNVVKDQLDLDGLKNKRSWHSLFKKISPPFSSESSMGEKLINFENELKQEENNSKMAQIYKPMPLWNLNFNKKELNLLKRQSNNKLHLKIFFPKSNHLADRQNFVPPLMPFFRRNEFPGTITSRRGKAVCWNTFQKKPHSPLFIHHLNLLKNFFAKRKKIQINQDVPTKSWQSTSKLFQFLRDYLLSLQAYIRKYLKLPFLIIIKNFIRQLFFQPAEWEKDWTNLSKEVYVQCDFYGKAGSVGVKLPNFFANDEPKQIKIVNPFELRFWTRSFSEQSSLQESENSSFLNVWGRETKMPFGKVKKSPSFWQLFIERIKLILQYKILKNLSVSSSIDSIEIQKEIKNPRIQSQIDVQQNFQIEQSKRNLGTKDEEKVKNLNKKIIDNNFKYKTTKRKIVNNSTQNKTFSDFNKKEKINRTRQYTFQNMSILLQRQWFHFYRLFLKKERELFFELQTKMFEMKKIISRKNTKVIKIFLKLFYNVSRFLRSLYYQISEFFNWLSLKFVKNQKEISSNIDAFDLKPTKNLSQAYIIHSIWEDRMMSRPNITSLMKSWNQNVSLKNNLENFLNKQGILGNEKPENLTEHQWQEWLKNFRVYTPSLKLWALWAPNYWTQAVEQYWKELPSSKLKSILNQEPNKINKSLNFTTSLDNSTLNKFLEPHLPLFQAVQKQKKLWKFNILSRNYTEVTNDGDIDSFFSWQTTDFDKKTHYLFDTLKKVKGKDKNLIVSPINLSSLPQIKENKLKRNLSQQNIKKELPLIQREKKRLDFDIKLQTLRQRGTFFPVSTRRWKLKKLKNKLEKLAKTVIKKPQSGELSSSLTIGEKNKKLIRELFVAENRLFTNILENWNSKVLDDELLMYNTISSILRFANKNINALAINNSDSLSLFPRNILRPLDLNFLLLEDIYLPTYLREMKILEYFHFEKENQNIPSTSTVSHSHFSNKKEKTIYAETINKWHLILQQKQNVIKDRQTIVRFLWPTHRLEDLSCINRFWLGTANQSRFSILRIQTVPNI</sequence>
<comment type="function">
    <text evidence="1">Involved in protein precursor import into chloroplasts. May be part of an intermediate translocation complex acting as a protein-conducting channel at the inner envelope.</text>
</comment>
<comment type="subunit">
    <text evidence="1">Part of the Tic complex.</text>
</comment>
<comment type="subcellular location">
    <subcellularLocation>
        <location evidence="1">Plastid</location>
        <location evidence="1">Chloroplast inner membrane</location>
        <topology evidence="2">Multi-pass membrane protein</topology>
    </subcellularLocation>
</comment>
<comment type="similarity">
    <text evidence="3">Belongs to the TIC214 family.</text>
</comment>
<name>TI214_STAPU</name>
<keyword id="KW-0150">Chloroplast</keyword>
<keyword id="KW-0472">Membrane</keyword>
<keyword id="KW-0934">Plastid</keyword>
<keyword id="KW-1001">Plastid inner membrane</keyword>
<keyword id="KW-0653">Protein transport</keyword>
<keyword id="KW-0812">Transmembrane</keyword>
<keyword id="KW-1133">Transmembrane helix</keyword>
<keyword id="KW-0813">Transport</keyword>
<accession>Q32RZ9</accession>
<feature type="chain" id="PRO_0000262633" description="Protein TIC 214">
    <location>
        <begin position="1"/>
        <end position="1507"/>
    </location>
</feature>
<feature type="transmembrane region" description="Helical" evidence="2">
    <location>
        <begin position="4"/>
        <end position="24"/>
    </location>
</feature>
<feature type="transmembrane region" description="Helical" evidence="2">
    <location>
        <begin position="53"/>
        <end position="73"/>
    </location>
</feature>
<feature type="transmembrane region" description="Helical" evidence="2">
    <location>
        <begin position="81"/>
        <end position="101"/>
    </location>
</feature>
<feature type="transmembrane region" description="Helical" evidence="2">
    <location>
        <begin position="129"/>
        <end position="149"/>
    </location>
</feature>
<feature type="transmembrane region" description="Helical" evidence="2">
    <location>
        <begin position="163"/>
        <end position="183"/>
    </location>
</feature>
<feature type="transmembrane region" description="Helical" evidence="2">
    <location>
        <begin position="202"/>
        <end position="222"/>
    </location>
</feature>
<organism>
    <name type="scientific">Staurastrum punctulatum</name>
    <name type="common">Green alga</name>
    <name type="synonym">Cosmoastrum punctulatum</name>
    <dbReference type="NCBI Taxonomy" id="102822"/>
    <lineage>
        <taxon>Eukaryota</taxon>
        <taxon>Viridiplantae</taxon>
        <taxon>Streptophyta</taxon>
        <taxon>Zygnematophyceae</taxon>
        <taxon>Zygnematophycidae</taxon>
        <taxon>Desmidiales</taxon>
        <taxon>Desmidiaceae</taxon>
        <taxon>Staurastrum</taxon>
    </lineage>
</organism>
<dbReference type="EMBL" id="AY958085">
    <property type="protein sequence ID" value="AAX45762.1"/>
    <property type="molecule type" value="Genomic_DNA"/>
</dbReference>
<dbReference type="RefSeq" id="YP_636377.1">
    <property type="nucleotide sequence ID" value="NC_008116.1"/>
</dbReference>
<dbReference type="GeneID" id="4108670"/>
<dbReference type="GO" id="GO:0009706">
    <property type="term" value="C:chloroplast inner membrane"/>
    <property type="evidence" value="ECO:0007669"/>
    <property type="project" value="UniProtKB-SubCell"/>
</dbReference>
<dbReference type="GO" id="GO:0015031">
    <property type="term" value="P:protein transport"/>
    <property type="evidence" value="ECO:0007669"/>
    <property type="project" value="UniProtKB-KW"/>
</dbReference>
<dbReference type="InterPro" id="IPR008896">
    <property type="entry name" value="TIC214"/>
</dbReference>
<dbReference type="Pfam" id="PF05758">
    <property type="entry name" value="Ycf1"/>
    <property type="match status" value="3"/>
</dbReference>
<gene>
    <name evidence="1" type="primary">TIC214</name>
    <name type="synonym">ycf1</name>
</gene>